<gene>
    <name evidence="8" type="primary">Gramd1a</name>
</gene>
<dbReference type="EMBL" id="BC105896">
    <property type="protein sequence ID" value="AAI05897.1"/>
    <property type="status" value="ALT_INIT"/>
    <property type="molecule type" value="mRNA"/>
</dbReference>
<dbReference type="EMBL" id="AY171575">
    <property type="protein sequence ID" value="AAO45419.1"/>
    <property type="status" value="ALT_INIT"/>
    <property type="molecule type" value="mRNA"/>
</dbReference>
<dbReference type="RefSeq" id="NP_001014182.3">
    <property type="nucleotide sequence ID" value="NM_001014160.3"/>
</dbReference>
<dbReference type="RefSeq" id="XP_006228897.1">
    <property type="nucleotide sequence ID" value="XM_006228835.3"/>
</dbReference>
<dbReference type="SMR" id="Q3KR56"/>
<dbReference type="FunCoup" id="Q3KR56">
    <property type="interactions" value="1858"/>
</dbReference>
<dbReference type="STRING" id="10116.ENSRNOP00000028660"/>
<dbReference type="iPTMnet" id="Q3KR56"/>
<dbReference type="PhosphoSitePlus" id="Q3KR56"/>
<dbReference type="PaxDb" id="10116-ENSRNOP00000028660"/>
<dbReference type="GeneID" id="361550"/>
<dbReference type="KEGG" id="rno:361550"/>
<dbReference type="UCSC" id="RGD:1311022">
    <property type="organism name" value="rat"/>
</dbReference>
<dbReference type="AGR" id="RGD:1311022"/>
<dbReference type="CTD" id="57655"/>
<dbReference type="RGD" id="1311022">
    <property type="gene designation" value="Gramd1a"/>
</dbReference>
<dbReference type="eggNOG" id="KOG1032">
    <property type="taxonomic scope" value="Eukaryota"/>
</dbReference>
<dbReference type="HOGENOM" id="CLU_015189_1_0_1"/>
<dbReference type="InParanoid" id="Q3KR56"/>
<dbReference type="PhylomeDB" id="Q3KR56"/>
<dbReference type="TreeFam" id="TF327695"/>
<dbReference type="PRO" id="PR:Q3KR56"/>
<dbReference type="Proteomes" id="UP000002494">
    <property type="component" value="Unplaced"/>
</dbReference>
<dbReference type="GO" id="GO:0005776">
    <property type="term" value="C:autophagosome"/>
    <property type="evidence" value="ECO:0007669"/>
    <property type="project" value="UniProtKB-SubCell"/>
</dbReference>
<dbReference type="GO" id="GO:0031410">
    <property type="term" value="C:cytoplasmic vesicle"/>
    <property type="evidence" value="ECO:0007669"/>
    <property type="project" value="UniProtKB-KW"/>
</dbReference>
<dbReference type="GO" id="GO:0005789">
    <property type="term" value="C:endoplasmic reticulum membrane"/>
    <property type="evidence" value="ECO:0000250"/>
    <property type="project" value="UniProtKB"/>
</dbReference>
<dbReference type="GO" id="GO:0140268">
    <property type="term" value="C:endoplasmic reticulum-plasma membrane contact site"/>
    <property type="evidence" value="ECO:0000250"/>
    <property type="project" value="UniProtKB"/>
</dbReference>
<dbReference type="GO" id="GO:0044232">
    <property type="term" value="C:organelle membrane contact site"/>
    <property type="evidence" value="ECO:0000250"/>
    <property type="project" value="UniProtKB"/>
</dbReference>
<dbReference type="GO" id="GO:0005886">
    <property type="term" value="C:plasma membrane"/>
    <property type="evidence" value="ECO:0000250"/>
    <property type="project" value="UniProtKB"/>
</dbReference>
<dbReference type="GO" id="GO:0015485">
    <property type="term" value="F:cholesterol binding"/>
    <property type="evidence" value="ECO:0000250"/>
    <property type="project" value="UniProtKB"/>
</dbReference>
<dbReference type="GO" id="GO:0120020">
    <property type="term" value="F:cholesterol transfer activity"/>
    <property type="evidence" value="ECO:0000250"/>
    <property type="project" value="UniProtKB"/>
</dbReference>
<dbReference type="GO" id="GO:0006914">
    <property type="term" value="P:autophagy"/>
    <property type="evidence" value="ECO:0007669"/>
    <property type="project" value="UniProtKB-KW"/>
</dbReference>
<dbReference type="GO" id="GO:0071397">
    <property type="term" value="P:cellular response to cholesterol"/>
    <property type="evidence" value="ECO:0000250"/>
    <property type="project" value="UniProtKB"/>
</dbReference>
<dbReference type="GO" id="GO:0032366">
    <property type="term" value="P:intracellular sterol transport"/>
    <property type="evidence" value="ECO:0000318"/>
    <property type="project" value="GO_Central"/>
</dbReference>
<dbReference type="CDD" id="cd13220">
    <property type="entry name" value="PH-GRAM_GRAMDC"/>
    <property type="match status" value="1"/>
</dbReference>
<dbReference type="FunFam" id="2.30.29.30:FF:000008">
    <property type="entry name" value="GRAM domain containing 1B"/>
    <property type="match status" value="1"/>
</dbReference>
<dbReference type="Gene3D" id="2.30.29.30">
    <property type="entry name" value="Pleckstrin-homology domain (PH domain)/Phosphotyrosine-binding domain (PTB)"/>
    <property type="match status" value="1"/>
</dbReference>
<dbReference type="InterPro" id="IPR051482">
    <property type="entry name" value="Cholesterol_transport"/>
</dbReference>
<dbReference type="InterPro" id="IPR004182">
    <property type="entry name" value="GRAM"/>
</dbReference>
<dbReference type="InterPro" id="IPR011993">
    <property type="entry name" value="PH-like_dom_sf"/>
</dbReference>
<dbReference type="InterPro" id="IPR031968">
    <property type="entry name" value="VASt"/>
</dbReference>
<dbReference type="PANTHER" id="PTHR23319">
    <property type="entry name" value="GRAM DOMAIN CONTAINING 1B, ISOFORM E"/>
    <property type="match status" value="1"/>
</dbReference>
<dbReference type="PANTHER" id="PTHR23319:SF8">
    <property type="entry name" value="PROTEIN ASTER-A"/>
    <property type="match status" value="1"/>
</dbReference>
<dbReference type="Pfam" id="PF02893">
    <property type="entry name" value="GRAM"/>
    <property type="match status" value="1"/>
</dbReference>
<dbReference type="Pfam" id="PF16016">
    <property type="entry name" value="VASt"/>
    <property type="match status" value="1"/>
</dbReference>
<dbReference type="SMART" id="SM00568">
    <property type="entry name" value="GRAM"/>
    <property type="match status" value="1"/>
</dbReference>
<dbReference type="PROSITE" id="PS51778">
    <property type="entry name" value="VAST"/>
    <property type="match status" value="1"/>
</dbReference>
<feature type="chain" id="PRO_0000287448" description="Protein Aster-A">
    <location>
        <begin position="1"/>
        <end position="723"/>
    </location>
</feature>
<feature type="transmembrane region" description="Helical" evidence="3">
    <location>
        <begin position="610"/>
        <end position="630"/>
    </location>
</feature>
<feature type="domain" description="GRAM" evidence="3">
    <location>
        <begin position="93"/>
        <end position="160"/>
    </location>
</feature>
<feature type="domain" description="VASt" evidence="4">
    <location>
        <begin position="370"/>
        <end position="541"/>
    </location>
</feature>
<feature type="region of interest" description="Disordered" evidence="5">
    <location>
        <begin position="1"/>
        <end position="63"/>
    </location>
</feature>
<feature type="region of interest" description="Disordered" evidence="5">
    <location>
        <begin position="257"/>
        <end position="337"/>
    </location>
</feature>
<feature type="region of interest" description="Disordered" evidence="5">
    <location>
        <begin position="562"/>
        <end position="601"/>
    </location>
</feature>
<feature type="compositionally biased region" description="Low complexity" evidence="5">
    <location>
        <begin position="1"/>
        <end position="18"/>
    </location>
</feature>
<feature type="compositionally biased region" description="Pro residues" evidence="5">
    <location>
        <begin position="28"/>
        <end position="38"/>
    </location>
</feature>
<feature type="compositionally biased region" description="Polar residues" evidence="5">
    <location>
        <begin position="302"/>
        <end position="314"/>
    </location>
</feature>
<feature type="compositionally biased region" description="Basic and acidic residues" evidence="5">
    <location>
        <begin position="566"/>
        <end position="576"/>
    </location>
</feature>
<feature type="compositionally biased region" description="Polar residues" evidence="5">
    <location>
        <begin position="579"/>
        <end position="595"/>
    </location>
</feature>
<feature type="modified residue" description="Phosphoserine" evidence="2">
    <location>
        <position position="265"/>
    </location>
</feature>
<feature type="modified residue" description="Phosphoserine" evidence="2">
    <location>
        <position position="269"/>
    </location>
</feature>
<feature type="modified residue" description="Phosphoserine" evidence="1">
    <location>
        <position position="273"/>
    </location>
</feature>
<feature type="modified residue" description="Phosphoserine" evidence="2">
    <location>
        <position position="418"/>
    </location>
</feature>
<feature type="sequence conflict" description="In Ref. 2; AAO45419." evidence="7" ref="2">
    <original>S</original>
    <variation>G</variation>
    <location>
        <position position="287"/>
    </location>
</feature>
<feature type="sequence conflict" description="In Ref. 2; AAO45419." evidence="7" ref="2">
    <original>E</original>
    <variation>G</variation>
    <location>
        <position position="537"/>
    </location>
</feature>
<feature type="sequence conflict" description="In Ref. 2; AAO45419." evidence="7" ref="2">
    <original>I</original>
    <variation>T</variation>
    <location>
        <position position="622"/>
    </location>
</feature>
<evidence type="ECO:0000250" key="1">
    <source>
        <dbReference type="UniProtKB" id="Q8VEF1"/>
    </source>
</evidence>
<evidence type="ECO:0000250" key="2">
    <source>
        <dbReference type="UniProtKB" id="Q96CP6"/>
    </source>
</evidence>
<evidence type="ECO:0000255" key="3"/>
<evidence type="ECO:0000255" key="4">
    <source>
        <dbReference type="PROSITE-ProRule" id="PRU01114"/>
    </source>
</evidence>
<evidence type="ECO:0000256" key="5">
    <source>
        <dbReference type="SAM" id="MobiDB-lite"/>
    </source>
</evidence>
<evidence type="ECO:0000269" key="6">
    <source>
    </source>
</evidence>
<evidence type="ECO:0000305" key="7"/>
<evidence type="ECO:0000312" key="8">
    <source>
        <dbReference type="RGD" id="1311022"/>
    </source>
</evidence>
<name>ASTRA_RAT</name>
<reference key="1">
    <citation type="journal article" date="2004" name="Genome Res.">
        <title>The status, quality, and expansion of the NIH full-length cDNA project: the Mammalian Gene Collection (MGC).</title>
        <authorList>
            <consortium name="The MGC Project Team"/>
        </authorList>
    </citation>
    <scope>NUCLEOTIDE SEQUENCE [LARGE SCALE MRNA]</scope>
    <source>
        <tissue>Thymus</tissue>
    </source>
</reference>
<reference key="2">
    <citation type="journal article" date="2004" name="Gene">
        <title>Differential gene expressions in the visual cortex of postnatal day 1 versus day 21 rats revealed by suppression subtractive hybridization.</title>
        <authorList>
            <person name="Feng Y."/>
            <person name="Liang H.L."/>
            <person name="Wong-Riley M."/>
        </authorList>
    </citation>
    <scope>NUCLEOTIDE SEQUENCE [MRNA] OF 9-723</scope>
    <scope>DEVELOPMENTAL STAGE</scope>
    <source>
        <strain>CD Charles River</strain>
    </source>
</reference>
<protein>
    <recommendedName>
        <fullName evidence="1">Protein Aster-A</fullName>
    </recommendedName>
    <alternativeName>
        <fullName>EG1RVC</fullName>
    </alternativeName>
    <alternativeName>
        <fullName evidence="7">GRAM domain-containing protein 1A</fullName>
    </alternativeName>
</protein>
<organism>
    <name type="scientific">Rattus norvegicus</name>
    <name type="common">Rat</name>
    <dbReference type="NCBI Taxonomy" id="10116"/>
    <lineage>
        <taxon>Eukaryota</taxon>
        <taxon>Metazoa</taxon>
        <taxon>Chordata</taxon>
        <taxon>Craniata</taxon>
        <taxon>Vertebrata</taxon>
        <taxon>Euteleostomi</taxon>
        <taxon>Mammalia</taxon>
        <taxon>Eutheria</taxon>
        <taxon>Euarchontoglires</taxon>
        <taxon>Glires</taxon>
        <taxon>Rodentia</taxon>
        <taxon>Myomorpha</taxon>
        <taxon>Muroidea</taxon>
        <taxon>Muridae</taxon>
        <taxon>Murinae</taxon>
        <taxon>Rattus</taxon>
    </lineage>
</organism>
<accession>Q3KR56</accession>
<accession>Q6Y8E7</accession>
<keyword id="KW-0072">Autophagy</keyword>
<keyword id="KW-1003">Cell membrane</keyword>
<keyword id="KW-0968">Cytoplasmic vesicle</keyword>
<keyword id="KW-0256">Endoplasmic reticulum</keyword>
<keyword id="KW-0445">Lipid transport</keyword>
<keyword id="KW-0446">Lipid-binding</keyword>
<keyword id="KW-0472">Membrane</keyword>
<keyword id="KW-0597">Phosphoprotein</keyword>
<keyword id="KW-1185">Reference proteome</keyword>
<keyword id="KW-0812">Transmembrane</keyword>
<keyword id="KW-1133">Transmembrane helix</keyword>
<keyword id="KW-0813">Transport</keyword>
<sequence length="723" mass="80684">MFDTTPHSGRSSPSSSPSLRKRLQLLPPSRPPSAPEPEPGTMVEKGSDSSSEKSGVSGTLSTQSLGSRNFIRNSKKMQSWYSMLCPTYKQRNEDFRKLFSKLPEAERLIVDYSCALQREILLQGRLYLSENWICFYSNIFRWETTISIQLKEVTCLKKEKTAKLIPNAIQICTESEKHFFTSFGARDRCFLLIFRLWQNALLEKTLSPRELWHLVHQCYGSELGLTSEDEDYVCPLQLNGLGSPKEVGDVIALSDISPSGAADRSQEPSPVGSRCGRVTPNLSRASSDADHGAEEDKEDQTDSQLDASSSQTVTPVAEPLSAEPAPPDGPTSNLGPLDLLSREELLTDTSNSSSSTGEEGDLAALLPDLSGRLLINSVFHVGAERLQQMLFSDSPFLQGFLQQRKFTDVTLSPWSSDSKCHQRRVLTYTIPISNQLGPKSASVVETQTLFRRGPQAGGCVVDSEVLTQGIPYQDYFYTAHRYCILGLARNKARLRVSSEIRYRKQPWSLVKSLIEKSSWTGIEDYFHHLDRELAKAEKVSLEEGGKDARGLLSGLRRRKRPLSWRGHRDGPQHPDPDPCTQTSMHTSGSLSSRFSEPSVDQGPGAGIPSALVLISIVLIVLIALNALLFYRLWSLERTAHTFESWHSLALAKGKFPQTATEWAEILALQKHFHSVEVHKWRQILRASVELLDEMKFSLEKLHQGITVPDPPLDTQPHPDDSFP</sequence>
<proteinExistence type="evidence at transcript level"/>
<comment type="function">
    <text evidence="1 2">Cholesterol transporter that mediates non-vesicular transport of cholesterol from the plasma membrane (PM) to the endoplasmic reticulum (ER) (By similarity). Contains unique domains for binding cholesterol and the PM, thereby serving as a molecular bridge for the transfer of cholesterol from the PM to the ER (By similarity). Plays a crucial role in cholesterol homeostasis and has the unique ability to localize to the PM based on the level of membrane cholesterol (By similarity). In lipid-poor conditions localizes to the ER membrane and in response to excess cholesterol in the PM is recruited to the endoplasmic reticulum-plasma membrane contact sites (EPCS) which is mediated by the GRAM domain (By similarity). At the EPCS, the sterol-binding VASt/ASTER domain binds to the cholesterol in the PM and facilitates its transfer from the PM to ER (By similarity). May play a role in tumor progression (By similarity). Plays a role in autophagy regulation and is required for biogenesis of the autophagosome. This function in autophagy requires its cholesterol-transfer activity (By similarity).</text>
</comment>
<comment type="subcellular location">
    <subcellularLocation>
        <location evidence="2">Endoplasmic reticulum membrane</location>
        <topology evidence="3">Single-pass membrane protein</topology>
    </subcellularLocation>
    <subcellularLocation>
        <location evidence="2">Cell membrane</location>
        <topology evidence="3">Single-pass membrane protein</topology>
    </subcellularLocation>
    <subcellularLocation>
        <location evidence="2">Cytoplasmic vesicle</location>
        <location evidence="2">Autophagosome</location>
    </subcellularLocation>
    <text evidence="1 2">In lipid-poor conditions localizes to the ER membrane and in response to excess cholesterol in the PM is recruited to the endoplasmic reticulum-plasma membrane contact sites (EPCS) (By similarity). Localizes to distinct EPCS than GRAMD2A and ESYT2/3 (By similarity).</text>
</comment>
<comment type="developmental stage">
    <text evidence="6">Expressed at a significantly higher level in postnatal day 1 (PND1) than in PND21 visual cortical.</text>
</comment>
<comment type="domain">
    <text evidence="1">GRAM domain binds phosphatidylserine in the PM and mediates protein recruitment to endoplasmic reticulum-plasma membrane contact sites (EPCS) in response to excess cholesterol in the PM.</text>
</comment>
<comment type="domain">
    <text evidence="1">VASt (VAD1 Analog of StAR-related lipid transfer) domain, also known as ASTER (Greek for star) domain is a sterol-binding domain.</text>
</comment>
<comment type="sequence caution" evidence="7">
    <conflict type="erroneous initiation">
        <sequence resource="EMBL-CDS" id="AAI05897"/>
    </conflict>
    <text>Truncated N-terminus.</text>
</comment>
<comment type="sequence caution" evidence="7">
    <conflict type="erroneous initiation">
        <sequence resource="EMBL-CDS" id="AAO45419"/>
    </conflict>
    <text>Truncated N-terminus.</text>
</comment>